<keyword id="KW-0997">Cell inner membrane</keyword>
<keyword id="KW-1003">Cell membrane</keyword>
<keyword id="KW-0143">Chaperone</keyword>
<keyword id="KW-0472">Membrane</keyword>
<keyword id="KW-0653">Protein transport</keyword>
<keyword id="KW-1185">Reference proteome</keyword>
<keyword id="KW-0812">Transmembrane</keyword>
<keyword id="KW-1133">Transmembrane helix</keyword>
<keyword id="KW-0813">Transport</keyword>
<accession>B2FPA5</accession>
<gene>
    <name evidence="1" type="primary">yidC</name>
    <name type="ordered locus">Smlt4693</name>
</gene>
<dbReference type="EMBL" id="AM743169">
    <property type="protein sequence ID" value="CAQ48045.1"/>
    <property type="molecule type" value="Genomic_DNA"/>
</dbReference>
<dbReference type="RefSeq" id="WP_012481686.1">
    <property type="nucleotide sequence ID" value="NC_010943.1"/>
</dbReference>
<dbReference type="SMR" id="B2FPA5"/>
<dbReference type="EnsemblBacteria" id="CAQ48045">
    <property type="protein sequence ID" value="CAQ48045"/>
    <property type="gene ID" value="Smlt4693"/>
</dbReference>
<dbReference type="KEGG" id="sml:Smlt4693"/>
<dbReference type="eggNOG" id="COG0706">
    <property type="taxonomic scope" value="Bacteria"/>
</dbReference>
<dbReference type="HOGENOM" id="CLU_016535_3_0_6"/>
<dbReference type="Proteomes" id="UP000008840">
    <property type="component" value="Chromosome"/>
</dbReference>
<dbReference type="GO" id="GO:0005886">
    <property type="term" value="C:plasma membrane"/>
    <property type="evidence" value="ECO:0007669"/>
    <property type="project" value="UniProtKB-SubCell"/>
</dbReference>
<dbReference type="GO" id="GO:0032977">
    <property type="term" value="F:membrane insertase activity"/>
    <property type="evidence" value="ECO:0007669"/>
    <property type="project" value="InterPro"/>
</dbReference>
<dbReference type="GO" id="GO:0051205">
    <property type="term" value="P:protein insertion into membrane"/>
    <property type="evidence" value="ECO:0007669"/>
    <property type="project" value="TreeGrafter"/>
</dbReference>
<dbReference type="GO" id="GO:0015031">
    <property type="term" value="P:protein transport"/>
    <property type="evidence" value="ECO:0007669"/>
    <property type="project" value="UniProtKB-KW"/>
</dbReference>
<dbReference type="CDD" id="cd20070">
    <property type="entry name" value="5TM_YidC_Alb3"/>
    <property type="match status" value="1"/>
</dbReference>
<dbReference type="CDD" id="cd19961">
    <property type="entry name" value="EcYidC-like_peri"/>
    <property type="match status" value="1"/>
</dbReference>
<dbReference type="Gene3D" id="2.70.98.90">
    <property type="match status" value="1"/>
</dbReference>
<dbReference type="HAMAP" id="MF_01810">
    <property type="entry name" value="YidC_type1"/>
    <property type="match status" value="1"/>
</dbReference>
<dbReference type="InterPro" id="IPR019998">
    <property type="entry name" value="Membr_insert_YidC"/>
</dbReference>
<dbReference type="InterPro" id="IPR028053">
    <property type="entry name" value="Membr_insert_YidC_N"/>
</dbReference>
<dbReference type="InterPro" id="IPR001708">
    <property type="entry name" value="YidC/ALB3/OXA1/COX18"/>
</dbReference>
<dbReference type="InterPro" id="IPR028055">
    <property type="entry name" value="YidC/Oxa/ALB_C"/>
</dbReference>
<dbReference type="InterPro" id="IPR047196">
    <property type="entry name" value="YidC_ALB_C"/>
</dbReference>
<dbReference type="InterPro" id="IPR038221">
    <property type="entry name" value="YidC_periplasmic_sf"/>
</dbReference>
<dbReference type="NCBIfam" id="NF002352">
    <property type="entry name" value="PRK01318.1-3"/>
    <property type="match status" value="1"/>
</dbReference>
<dbReference type="NCBIfam" id="TIGR03593">
    <property type="entry name" value="yidC_nterm"/>
    <property type="match status" value="1"/>
</dbReference>
<dbReference type="NCBIfam" id="TIGR03592">
    <property type="entry name" value="yidC_oxa1_cterm"/>
    <property type="match status" value="1"/>
</dbReference>
<dbReference type="PANTHER" id="PTHR12428:SF65">
    <property type="entry name" value="CYTOCHROME C OXIDASE ASSEMBLY PROTEIN COX18, MITOCHONDRIAL"/>
    <property type="match status" value="1"/>
</dbReference>
<dbReference type="PANTHER" id="PTHR12428">
    <property type="entry name" value="OXA1"/>
    <property type="match status" value="1"/>
</dbReference>
<dbReference type="Pfam" id="PF02096">
    <property type="entry name" value="60KD_IMP"/>
    <property type="match status" value="1"/>
</dbReference>
<dbReference type="Pfam" id="PF14849">
    <property type="entry name" value="YidC_periplas"/>
    <property type="match status" value="1"/>
</dbReference>
<dbReference type="PRINTS" id="PR00701">
    <property type="entry name" value="60KDINNERMP"/>
</dbReference>
<dbReference type="PRINTS" id="PR01900">
    <property type="entry name" value="YIDCPROTEIN"/>
</dbReference>
<proteinExistence type="inferred from homology"/>
<reference key="1">
    <citation type="journal article" date="2008" name="Genome Biol.">
        <title>The complete genome, comparative and functional analysis of Stenotrophomonas maltophilia reveals an organism heavily shielded by drug resistance determinants.</title>
        <authorList>
            <person name="Crossman L.C."/>
            <person name="Gould V.C."/>
            <person name="Dow J.M."/>
            <person name="Vernikos G.S."/>
            <person name="Okazaki A."/>
            <person name="Sebaihia M."/>
            <person name="Saunders D."/>
            <person name="Arrowsmith C."/>
            <person name="Carver T."/>
            <person name="Peters N."/>
            <person name="Adlem E."/>
            <person name="Kerhornou A."/>
            <person name="Lord A."/>
            <person name="Murphy L."/>
            <person name="Seeger K."/>
            <person name="Squares R."/>
            <person name="Rutter S."/>
            <person name="Quail M.A."/>
            <person name="Rajandream M.A."/>
            <person name="Harris D."/>
            <person name="Churcher C."/>
            <person name="Bentley S.D."/>
            <person name="Parkhill J."/>
            <person name="Thomson N.R."/>
            <person name="Avison M.B."/>
        </authorList>
    </citation>
    <scope>NUCLEOTIDE SEQUENCE [LARGE SCALE GENOMIC DNA]</scope>
    <source>
        <strain>K279a</strain>
    </source>
</reference>
<comment type="function">
    <text evidence="1">Required for the insertion and/or proper folding and/or complex formation of integral membrane proteins into the membrane. Involved in integration of membrane proteins that insert both dependently and independently of the Sec translocase complex, as well as at least some lipoproteins. Aids folding of multispanning membrane proteins.</text>
</comment>
<comment type="subunit">
    <text evidence="1">Interacts with the Sec translocase complex via SecD. Specifically interacts with transmembrane segments of nascent integral membrane proteins during membrane integration.</text>
</comment>
<comment type="subcellular location">
    <subcellularLocation>
        <location evidence="1">Cell inner membrane</location>
        <topology evidence="1">Multi-pass membrane protein</topology>
    </subcellularLocation>
</comment>
<comment type="similarity">
    <text evidence="1">Belongs to the OXA1/ALB3/YidC family. Type 1 subfamily.</text>
</comment>
<name>YIDC_STRMK</name>
<feature type="chain" id="PRO_1000187710" description="Membrane protein insertase YidC">
    <location>
        <begin position="1"/>
        <end position="571"/>
    </location>
</feature>
<feature type="transmembrane region" description="Helical" evidence="1">
    <location>
        <begin position="4"/>
        <end position="24"/>
    </location>
</feature>
<feature type="transmembrane region" description="Helical" evidence="1">
    <location>
        <begin position="369"/>
        <end position="389"/>
    </location>
</feature>
<feature type="transmembrane region" description="Helical" evidence="1">
    <location>
        <begin position="440"/>
        <end position="460"/>
    </location>
</feature>
<feature type="transmembrane region" description="Helical" evidence="1">
    <location>
        <begin position="483"/>
        <end position="503"/>
    </location>
</feature>
<feature type="transmembrane region" description="Helical" evidence="1">
    <location>
        <begin position="518"/>
        <end position="538"/>
    </location>
</feature>
<feature type="region of interest" description="Disordered" evidence="2">
    <location>
        <begin position="29"/>
        <end position="78"/>
    </location>
</feature>
<feature type="compositionally biased region" description="Low complexity" evidence="2">
    <location>
        <begin position="34"/>
        <end position="43"/>
    </location>
</feature>
<feature type="compositionally biased region" description="Low complexity" evidence="2">
    <location>
        <begin position="55"/>
        <end position="78"/>
    </location>
</feature>
<protein>
    <recommendedName>
        <fullName evidence="1">Membrane protein insertase YidC</fullName>
    </recommendedName>
    <alternativeName>
        <fullName evidence="1">Foldase YidC</fullName>
    </alternativeName>
    <alternativeName>
        <fullName evidence="1">Membrane integrase YidC</fullName>
    </alternativeName>
    <alternativeName>
        <fullName evidence="1">Membrane protein YidC</fullName>
    </alternativeName>
</protein>
<evidence type="ECO:0000255" key="1">
    <source>
        <dbReference type="HAMAP-Rule" id="MF_01810"/>
    </source>
</evidence>
<evidence type="ECO:0000256" key="2">
    <source>
        <dbReference type="SAM" id="MobiDB-lite"/>
    </source>
</evidence>
<sequence>MNQTRVFLIFAWLMVAVLLWMEWSREKAAPTPAPTTTSAPAAAQSVPGANPGAIPSAQVPGAPGQAAAQAQASATPASQRVTVTTDVLRLVLDGGRVLDAELLQFPQTKDEGSPPVRLLTEDPAHPYSAISGWASEDRNTPVPGADGFKLVGDTKDFVLAKGQNELQIPFVWTADNGVTIKRTLTVSRNEYAVRFKDEVSNAGAAPWNGYVYRTLDRTPTILSRSMTNPDSFSFNGATWYDNDKKYQRRAFKDYLEDGTLNQNITGGWLAMLQHHFFTAWIPQKDQTAHYVLSQVAGRDLIEARGPAFTVAPGQSTSTEARLWVGPKLVNLIAKEDVPGLDRVVDYSRFSMMAVIGQGLFWVLNQVHKLVGNWGWAIVGLVVLLKLVLYPLSATQYKSGAKMRRFQPRIAQLKERYGDDRQKFQTAMMELYKKEKINPMGGCLPILIQMPIFFALYWVLVESVELRQAPWFGWIQDLTARDPYFILPVINVAVMWFTQKLTPAPGMDPMQQKMMQFMPLVFGVMMAFMPSGLVLYWVVNGGLGLLQQWWMTKRHGGEPVPATTAPAPVKKK</sequence>
<organism>
    <name type="scientific">Stenotrophomonas maltophilia (strain K279a)</name>
    <dbReference type="NCBI Taxonomy" id="522373"/>
    <lineage>
        <taxon>Bacteria</taxon>
        <taxon>Pseudomonadati</taxon>
        <taxon>Pseudomonadota</taxon>
        <taxon>Gammaproteobacteria</taxon>
        <taxon>Lysobacterales</taxon>
        <taxon>Lysobacteraceae</taxon>
        <taxon>Stenotrophomonas</taxon>
        <taxon>Stenotrophomonas maltophilia group</taxon>
    </lineage>
</organism>